<feature type="signal peptide" evidence="3">
    <location>
        <begin position="1"/>
        <end position="16"/>
    </location>
</feature>
<feature type="propeptide" id="PRO_0000380616" evidence="1">
    <location>
        <begin position="17"/>
        <end position="42"/>
    </location>
</feature>
<feature type="peptide" id="PRO_0000380617" description="Alpha-conotoxin-like Ai1.1">
    <location>
        <begin position="43"/>
        <end position="59"/>
    </location>
</feature>
<feature type="region of interest" description="Ser-Xaa-Pro motif, crucial for potent interaction with nAChR" evidence="2">
    <location>
        <begin position="47"/>
        <end position="49"/>
    </location>
</feature>
<feature type="modified residue" description="Pyrrolidone carboxylic acid" evidence="1">
    <location>
        <position position="43"/>
    </location>
</feature>
<feature type="modified residue" description="Cysteine amide" evidence="1">
    <location>
        <position position="59"/>
    </location>
</feature>
<feature type="disulfide bond" evidence="2">
    <location>
        <begin position="45"/>
        <end position="51"/>
    </location>
</feature>
<feature type="disulfide bond" evidence="2">
    <location>
        <begin position="46"/>
        <end position="59"/>
    </location>
</feature>
<accession>P0CB07</accession>
<comment type="function">
    <text evidence="1">Alpha-conotoxins act on postsynaptic membranes, they bind to the nicotinic acetylcholine receptors (nAChR) and thus inhibit them.</text>
</comment>
<comment type="subcellular location">
    <subcellularLocation>
        <location evidence="4">Secreted</location>
    </subcellularLocation>
</comment>
<comment type="tissue specificity">
    <text evidence="4">Expressed by the venom duct.</text>
</comment>
<comment type="domain">
    <text evidence="4">The cysteine framework is I (CC-C-C). Alpha4/7 pattern.</text>
</comment>
<comment type="similarity">
    <text evidence="4">Belongs to the conotoxin A superfamily.</text>
</comment>
<proteinExistence type="inferred from homology"/>
<sequence>MFTVFLLVVLATTVVSFTSDRAFRGRNAAAKASGLVGLTDKRQECCSYPACNLDHPELCG</sequence>
<reference key="1">
    <citation type="patent" date="2004-09-28" number="US6797808">
        <authorList>
            <person name="Watkins M."/>
            <person name="Olivera B.M."/>
            <person name="Hillyard D.R."/>
            <person name="McIntosh M.J."/>
            <person name="Jones R.M."/>
        </authorList>
    </citation>
    <scope>NUCLEOTIDE SEQUENCE [GENOMIC DNA]</scope>
</reference>
<evidence type="ECO:0000250" key="1"/>
<evidence type="ECO:0000250" key="2">
    <source>
        <dbReference type="UniProtKB" id="P56636"/>
    </source>
</evidence>
<evidence type="ECO:0000255" key="3"/>
<evidence type="ECO:0000305" key="4"/>
<organism>
    <name type="scientific">Conus ammiralis</name>
    <name type="common">Admiral cone</name>
    <dbReference type="NCBI Taxonomy" id="97188"/>
    <lineage>
        <taxon>Eukaryota</taxon>
        <taxon>Metazoa</taxon>
        <taxon>Spiralia</taxon>
        <taxon>Lophotrochozoa</taxon>
        <taxon>Mollusca</taxon>
        <taxon>Gastropoda</taxon>
        <taxon>Caenogastropoda</taxon>
        <taxon>Neogastropoda</taxon>
        <taxon>Conoidea</taxon>
        <taxon>Conidae</taxon>
        <taxon>Conus</taxon>
        <taxon>Cylinder</taxon>
    </lineage>
</organism>
<name>CA11_CONAJ</name>
<protein>
    <recommendedName>
        <fullName>Alpha-conotoxin-like Ai1.1</fullName>
    </recommendedName>
</protein>
<keyword id="KW-0008">Acetylcholine receptor inhibiting toxin</keyword>
<keyword id="KW-0027">Amidation</keyword>
<keyword id="KW-1015">Disulfide bond</keyword>
<keyword id="KW-0872">Ion channel impairing toxin</keyword>
<keyword id="KW-0528">Neurotoxin</keyword>
<keyword id="KW-0629">Postsynaptic neurotoxin</keyword>
<keyword id="KW-0873">Pyrrolidone carboxylic acid</keyword>
<keyword id="KW-0964">Secreted</keyword>
<keyword id="KW-0732">Signal</keyword>
<keyword id="KW-0800">Toxin</keyword>
<dbReference type="EMBL" id="AR584878">
    <property type="status" value="NOT_ANNOTATED_CDS"/>
    <property type="molecule type" value="Genomic_DNA"/>
</dbReference>
<dbReference type="ConoServer" id="346">
    <property type="toxin name" value="Ai1.1 patent"/>
</dbReference>
<dbReference type="GO" id="GO:0005576">
    <property type="term" value="C:extracellular region"/>
    <property type="evidence" value="ECO:0007669"/>
    <property type="project" value="UniProtKB-SubCell"/>
</dbReference>
<dbReference type="GO" id="GO:0035792">
    <property type="term" value="C:host cell postsynaptic membrane"/>
    <property type="evidence" value="ECO:0007669"/>
    <property type="project" value="UniProtKB-KW"/>
</dbReference>
<dbReference type="GO" id="GO:0030550">
    <property type="term" value="F:acetylcholine receptor inhibitor activity"/>
    <property type="evidence" value="ECO:0007669"/>
    <property type="project" value="UniProtKB-KW"/>
</dbReference>
<dbReference type="GO" id="GO:0099106">
    <property type="term" value="F:ion channel regulator activity"/>
    <property type="evidence" value="ECO:0007669"/>
    <property type="project" value="UniProtKB-KW"/>
</dbReference>
<dbReference type="GO" id="GO:0090729">
    <property type="term" value="F:toxin activity"/>
    <property type="evidence" value="ECO:0007669"/>
    <property type="project" value="UniProtKB-KW"/>
</dbReference>
<dbReference type="InterPro" id="IPR009958">
    <property type="entry name" value="Conotoxin_a-typ"/>
</dbReference>
<dbReference type="InterPro" id="IPR018072">
    <property type="entry name" value="Conotoxin_a-typ_CS"/>
</dbReference>
<dbReference type="Pfam" id="PF07365">
    <property type="entry name" value="Toxin_8"/>
    <property type="match status" value="1"/>
</dbReference>
<dbReference type="PROSITE" id="PS60014">
    <property type="entry name" value="ALPHA_CONOTOXIN"/>
    <property type="match status" value="1"/>
</dbReference>